<protein>
    <recommendedName>
        <fullName evidence="10">Cilia- and flagella-associated protein 221</fullName>
    </recommendedName>
    <alternativeName>
        <fullName evidence="8">Primary ciliary dyskinesia protein 1</fullName>
    </alternativeName>
</protein>
<feature type="chain" id="PRO_0000320614" description="Cilia- and flagella-associated protein 221">
    <location>
        <begin position="1"/>
        <end position="840"/>
    </location>
</feature>
<feature type="region of interest" description="Disordered" evidence="2">
    <location>
        <begin position="1"/>
        <end position="20"/>
    </location>
</feature>
<feature type="region of interest" description="Interaction with calmodulin" evidence="1">
    <location>
        <begin position="467"/>
        <end position="501"/>
    </location>
</feature>
<feature type="splice variant" id="VSP_039316" description="In isoform 2." evidence="7">
    <location>
        <begin position="1"/>
        <end position="286"/>
    </location>
</feature>
<feature type="splice variant" id="VSP_039317" description="In isoform 3." evidence="6">
    <location>
        <begin position="1"/>
        <end position="156"/>
    </location>
</feature>
<feature type="splice variant" id="VSP_039319" description="In isoform 4." evidence="6">
    <original>KTYVIPLQCSC</original>
    <variation>LPNSVFLVPDN</variation>
    <location>
        <begin position="177"/>
        <end position="187"/>
    </location>
</feature>
<feature type="splice variant" id="VSP_039318" description="In isoform 4." evidence="6">
    <location>
        <begin position="188"/>
        <end position="840"/>
    </location>
</feature>
<feature type="splice variant" id="VSP_039320" description="In isoform 3." evidence="6">
    <original>NPNPGLFAVMHPLTYAETLI</original>
    <variation>VSDNWQKPCFLCSFISAITL</variation>
    <location>
        <begin position="659"/>
        <end position="678"/>
    </location>
</feature>
<feature type="splice variant" id="VSP_039321" description="In isoform 3." evidence="6">
    <location>
        <begin position="679"/>
        <end position="840"/>
    </location>
</feature>
<feature type="sequence variant" id="VAR_039232" description="In dbSNP:rs2272058." evidence="3 4">
    <original>V</original>
    <variation>I</variation>
    <location>
        <position position="637"/>
    </location>
</feature>
<feature type="sequence variant" id="VAR_039233" description="In dbSNP:rs11686014.">
    <original>M</original>
    <variation>I</variation>
    <location>
        <position position="795"/>
    </location>
</feature>
<feature type="sequence conflict" description="In Ref. 2; BAG57111." evidence="9" ref="2">
    <original>D</original>
    <variation>G</variation>
    <location>
        <position position="367"/>
    </location>
</feature>
<dbReference type="EMBL" id="AK293665">
    <property type="protein sequence ID" value="BAG57111.1"/>
    <property type="molecule type" value="mRNA"/>
</dbReference>
<dbReference type="EMBL" id="AK304416">
    <property type="protein sequence ID" value="BAG65247.1"/>
    <property type="molecule type" value="mRNA"/>
</dbReference>
<dbReference type="EMBL" id="AC013275">
    <property type="status" value="NOT_ANNOTATED_CDS"/>
    <property type="molecule type" value="Genomic_DNA"/>
</dbReference>
<dbReference type="EMBL" id="AC069154">
    <property type="status" value="NOT_ANNOTATED_CDS"/>
    <property type="molecule type" value="Genomic_DNA"/>
</dbReference>
<dbReference type="EMBL" id="AC104817">
    <property type="status" value="NOT_ANNOTATED_CDS"/>
    <property type="molecule type" value="Genomic_DNA"/>
</dbReference>
<dbReference type="EMBL" id="BC036530">
    <property type="protein sequence ID" value="AAH36530.1"/>
    <property type="molecule type" value="mRNA"/>
</dbReference>
<dbReference type="CCDS" id="CCDS33282.2">
    <molecule id="Q4G0U5-1"/>
</dbReference>
<dbReference type="RefSeq" id="NP_001257978.2">
    <molecule id="Q4G0U5-1"/>
    <property type="nucleotide sequence ID" value="NM_001271049.2"/>
</dbReference>
<dbReference type="RefSeq" id="XP_006712416.1">
    <molecule id="Q4G0U5-1"/>
    <property type="nucleotide sequence ID" value="XM_006712353.4"/>
</dbReference>
<dbReference type="SMR" id="Q4G0U5"/>
<dbReference type="BioGRID" id="128322">
    <property type="interactions" value="2"/>
</dbReference>
<dbReference type="FunCoup" id="Q4G0U5">
    <property type="interactions" value="90"/>
</dbReference>
<dbReference type="STRING" id="9606.ENSP00000393222"/>
<dbReference type="GlyGen" id="Q4G0U5">
    <property type="glycosylation" value="2 sites, 1 O-linked glycan (1 site)"/>
</dbReference>
<dbReference type="iPTMnet" id="Q4G0U5"/>
<dbReference type="PhosphoSitePlus" id="Q4G0U5"/>
<dbReference type="BioMuta" id="CFAP221"/>
<dbReference type="DMDM" id="298286840"/>
<dbReference type="jPOST" id="Q4G0U5"/>
<dbReference type="MassIVE" id="Q4G0U5"/>
<dbReference type="PaxDb" id="9606-ENSP00000393222"/>
<dbReference type="PeptideAtlas" id="Q4G0U5"/>
<dbReference type="ProteomicsDB" id="62129">
    <molecule id="Q4G0U5-1"/>
</dbReference>
<dbReference type="ProteomicsDB" id="62130">
    <molecule id="Q4G0U5-2"/>
</dbReference>
<dbReference type="ProteomicsDB" id="62131">
    <molecule id="Q4G0U5-3"/>
</dbReference>
<dbReference type="ProteomicsDB" id="62132">
    <molecule id="Q4G0U5-4"/>
</dbReference>
<dbReference type="Antibodypedia" id="48000">
    <property type="antibodies" value="53 antibodies from 9 providers"/>
</dbReference>
<dbReference type="DNASU" id="200373"/>
<dbReference type="Ensembl" id="ENST00000413369.8">
    <molecule id="Q4G0U5-1"/>
    <property type="protein sequence ID" value="ENSP00000393222.2"/>
    <property type="gene ID" value="ENSG00000163075.13"/>
</dbReference>
<dbReference type="Ensembl" id="ENST00000598644.5">
    <molecule id="Q4G0U5-4"/>
    <property type="protein sequence ID" value="ENSP00000472563.1"/>
    <property type="gene ID" value="ENSG00000163075.13"/>
</dbReference>
<dbReference type="GeneID" id="200373"/>
<dbReference type="KEGG" id="hsa:200373"/>
<dbReference type="MANE-Select" id="ENST00000413369.8">
    <property type="protein sequence ID" value="ENSP00000393222.2"/>
    <property type="RefSeq nucleotide sequence ID" value="NM_001271049.2"/>
    <property type="RefSeq protein sequence ID" value="NP_001257978.2"/>
</dbReference>
<dbReference type="UCSC" id="uc031rou.2">
    <molecule id="Q4G0U5-1"/>
    <property type="organism name" value="human"/>
</dbReference>
<dbReference type="AGR" id="HGNC:33720"/>
<dbReference type="CTD" id="200373"/>
<dbReference type="DisGeNET" id="200373"/>
<dbReference type="GeneCards" id="CFAP221"/>
<dbReference type="HGNC" id="HGNC:33720">
    <property type="gene designation" value="CFAP221"/>
</dbReference>
<dbReference type="HPA" id="ENSG00000163075">
    <property type="expression patterns" value="Tissue enhanced (fallopian tube, testis)"/>
</dbReference>
<dbReference type="MalaCards" id="CFAP221"/>
<dbReference type="MIM" id="618704">
    <property type="type" value="gene"/>
</dbReference>
<dbReference type="neXtProt" id="NX_Q4G0U5"/>
<dbReference type="OpenTargets" id="ENSG00000163075"/>
<dbReference type="Orphanet" id="244">
    <property type="disease" value="Primary ciliary dyskinesia"/>
</dbReference>
<dbReference type="VEuPathDB" id="HostDB:ENSG00000163075"/>
<dbReference type="eggNOG" id="ENOG502QT0T">
    <property type="taxonomic scope" value="Eukaryota"/>
</dbReference>
<dbReference type="GeneTree" id="ENSGT00390000006925"/>
<dbReference type="HOGENOM" id="CLU_020964_0_0_1"/>
<dbReference type="InParanoid" id="Q4G0U5"/>
<dbReference type="OMA" id="TYNPPQW"/>
<dbReference type="OrthoDB" id="5538672at2759"/>
<dbReference type="PAN-GO" id="Q4G0U5">
    <property type="GO annotations" value="2 GO annotations based on evolutionary models"/>
</dbReference>
<dbReference type="PhylomeDB" id="Q4G0U5"/>
<dbReference type="PathwayCommons" id="Q4G0U5"/>
<dbReference type="BioGRID-ORCS" id="200373">
    <property type="hits" value="14 hits in 1098 CRISPR screens"/>
</dbReference>
<dbReference type="ChiTaRS" id="CFAP221">
    <property type="organism name" value="human"/>
</dbReference>
<dbReference type="GenomeRNAi" id="200373"/>
<dbReference type="Pharos" id="Q4G0U5">
    <property type="development level" value="Tbio"/>
</dbReference>
<dbReference type="PRO" id="PR:Q4G0U5"/>
<dbReference type="Proteomes" id="UP000005640">
    <property type="component" value="Chromosome 2"/>
</dbReference>
<dbReference type="RNAct" id="Q4G0U5">
    <property type="molecule type" value="protein"/>
</dbReference>
<dbReference type="Bgee" id="ENSG00000163075">
    <property type="expression patterns" value="Expressed in right uterine tube and 127 other cell types or tissues"/>
</dbReference>
<dbReference type="ExpressionAtlas" id="Q4G0U5">
    <property type="expression patterns" value="baseline and differential"/>
</dbReference>
<dbReference type="GO" id="GO:0097729">
    <property type="term" value="C:9+2 motile cilium"/>
    <property type="evidence" value="ECO:0000318"/>
    <property type="project" value="GO_Central"/>
</dbReference>
<dbReference type="GO" id="GO:0005930">
    <property type="term" value="C:axoneme"/>
    <property type="evidence" value="ECO:0000250"/>
    <property type="project" value="UniProtKB"/>
</dbReference>
<dbReference type="GO" id="GO:0005929">
    <property type="term" value="C:cilium"/>
    <property type="evidence" value="ECO:0000250"/>
    <property type="project" value="UniProtKB"/>
</dbReference>
<dbReference type="GO" id="GO:0005737">
    <property type="term" value="C:cytoplasm"/>
    <property type="evidence" value="ECO:0000250"/>
    <property type="project" value="UniProtKB"/>
</dbReference>
<dbReference type="GO" id="GO:0005576">
    <property type="term" value="C:extracellular region"/>
    <property type="evidence" value="ECO:0007669"/>
    <property type="project" value="GOC"/>
</dbReference>
<dbReference type="GO" id="GO:0097386">
    <property type="term" value="C:glial cell projection"/>
    <property type="evidence" value="ECO:0007669"/>
    <property type="project" value="Ensembl"/>
</dbReference>
<dbReference type="GO" id="GO:0002177">
    <property type="term" value="C:manchette"/>
    <property type="evidence" value="ECO:0000250"/>
    <property type="project" value="UniProtKB"/>
</dbReference>
<dbReference type="GO" id="GO:0036126">
    <property type="term" value="C:sperm flagellum"/>
    <property type="evidence" value="ECO:0007669"/>
    <property type="project" value="Ensembl"/>
</dbReference>
<dbReference type="GO" id="GO:0005516">
    <property type="term" value="F:calmodulin binding"/>
    <property type="evidence" value="ECO:0000250"/>
    <property type="project" value="UniProtKB"/>
</dbReference>
<dbReference type="GO" id="GO:0090660">
    <property type="term" value="P:cerebrospinal fluid circulation"/>
    <property type="evidence" value="ECO:0007669"/>
    <property type="project" value="Ensembl"/>
</dbReference>
<dbReference type="GO" id="GO:0060271">
    <property type="term" value="P:cilium assembly"/>
    <property type="evidence" value="ECO:0000250"/>
    <property type="project" value="UniProtKB"/>
</dbReference>
<dbReference type="GO" id="GO:0051649">
    <property type="term" value="P:establishment of localization in cell"/>
    <property type="evidence" value="ECO:0007669"/>
    <property type="project" value="Ensembl"/>
</dbReference>
<dbReference type="GO" id="GO:0044458">
    <property type="term" value="P:motile cilium assembly"/>
    <property type="evidence" value="ECO:0000318"/>
    <property type="project" value="GO_Central"/>
</dbReference>
<dbReference type="GO" id="GO:0120197">
    <property type="term" value="P:mucociliary clearance"/>
    <property type="evidence" value="ECO:0007669"/>
    <property type="project" value="Ensembl"/>
</dbReference>
<dbReference type="GO" id="GO:0120316">
    <property type="term" value="P:sperm flagellum assembly"/>
    <property type="evidence" value="ECO:0007669"/>
    <property type="project" value="Ensembl"/>
</dbReference>
<dbReference type="FunFam" id="2.60.40.10:FF:001321">
    <property type="entry name" value="Cilia and flagella associated protein 221"/>
    <property type="match status" value="1"/>
</dbReference>
<dbReference type="FunFam" id="2.60.40.10:FF:001358">
    <property type="entry name" value="Cilia and flagella associated protein 221"/>
    <property type="match status" value="1"/>
</dbReference>
<dbReference type="Gene3D" id="2.60.40.10">
    <property type="entry name" value="Immunoglobulins"/>
    <property type="match status" value="2"/>
</dbReference>
<dbReference type="InterPro" id="IPR029676">
    <property type="entry name" value="CFAP221"/>
</dbReference>
<dbReference type="InterPro" id="IPR053879">
    <property type="entry name" value="HYDIN_VesB_CFA65-like_Ig"/>
</dbReference>
<dbReference type="InterPro" id="IPR013783">
    <property type="entry name" value="Ig-like_fold"/>
</dbReference>
<dbReference type="PANTHER" id="PTHR46500">
    <property type="entry name" value="CILIA- AND FLAGELLA-ASSOCIATED PROTEIN 221"/>
    <property type="match status" value="1"/>
</dbReference>
<dbReference type="PANTHER" id="PTHR46500:SF1">
    <property type="entry name" value="CILIA- AND FLAGELLA-ASSOCIATED PROTEIN 221"/>
    <property type="match status" value="1"/>
</dbReference>
<dbReference type="Pfam" id="PF22544">
    <property type="entry name" value="HYDIN_VesB_CFA65-like_Ig"/>
    <property type="match status" value="1"/>
</dbReference>
<dbReference type="Pfam" id="PF24507">
    <property type="entry name" value="Ig_CFAP65_4th"/>
    <property type="match status" value="1"/>
</dbReference>
<gene>
    <name evidence="10" type="primary">CFAP221</name>
    <name evidence="8" type="synonym">PCDP1</name>
</gene>
<proteinExistence type="evidence at protein level"/>
<organism>
    <name type="scientific">Homo sapiens</name>
    <name type="common">Human</name>
    <dbReference type="NCBI Taxonomy" id="9606"/>
    <lineage>
        <taxon>Eukaryota</taxon>
        <taxon>Metazoa</taxon>
        <taxon>Chordata</taxon>
        <taxon>Craniata</taxon>
        <taxon>Vertebrata</taxon>
        <taxon>Euteleostomi</taxon>
        <taxon>Mammalia</taxon>
        <taxon>Eutheria</taxon>
        <taxon>Euarchontoglires</taxon>
        <taxon>Primates</taxon>
        <taxon>Haplorrhini</taxon>
        <taxon>Catarrhini</taxon>
        <taxon>Hominidae</taxon>
        <taxon>Homo</taxon>
    </lineage>
</organism>
<name>PCDP1_HUMAN</name>
<sequence>MAVVKTPSRGLKNAKEPFNNASPHLLKNLVEEPKKRKEVPNHLLESKVYAKLVNNKVIQARPGIIHFGGYQVEKQHQQILHLVNVSNEDTRVHILPPQTKYFEINYVRKEHHLVPGLSLTVTVTFSPDEWRYYYDCIRVHCKGDDTLLVPIHAYPVMNSLDFPSFINLSNVLLGESKTYVIPLQCSCPVDFEFYITLIQSHQAFAIEPTSGIIPANGKMTVTIKFTPFQYGTAQIKMQLWISQFNSQPYECVFTGTCYPNMALPLEEFERLNTLSKKVNVPPEKAMMHINFHRPPAKPKPQKVKEIEYQNLRFPVDLSNPFAVATVLNQEPGKLKIKELREVLDQGTEISKTRQMKEALFEQKVRQDIHEEMENHLKWQVHLGKDPMSFKLKKELTEEWQKACAKYKLDRGDPILDEEFQRLKTEVSHKRVVRNQEEKIKEFHPTFDPLINNTWLSRSRAQKRFQQVARKVMIQGRLFNMLSAVREMDKESILRKIGQAKQSIAQEANFFKFFLRRISQDDYTSRFSVSPKEVLPFAFPDCSPPQDSNELAPDGLGLVPIKSSEVQIKQSYSFFNLQVPQLYKIKRYQPFSVHKSSTSYRPQKLARALKQGAEDEVTTITALPKQDSTTQLSGKTSVLSMKPPEALAMSLDYDPLYVFNPNPGLFAVMHPLTYAETLIDYHLCSHPKYKFTKESRHGSSIPVTQKQFLHHTDIIPGIMHWKSFQSLVLSSLPDPSKMETTKSCDSFNSFMLPIDVPAILDALPEEDRLETVERELCEQNVEVMLTPEMIKVEFPMLNYKDIRKEKEVKDQAQPAEKAGEKLLEEMRNLRGKALNTYLILE</sequence>
<evidence type="ECO:0000250" key="1">
    <source>
        <dbReference type="UniProtKB" id="A9Q751"/>
    </source>
</evidence>
<evidence type="ECO:0000256" key="2">
    <source>
        <dbReference type="SAM" id="MobiDB-lite"/>
    </source>
</evidence>
<evidence type="ECO:0000269" key="3">
    <source>
    </source>
</evidence>
<evidence type="ECO:0000269" key="4">
    <source>
    </source>
</evidence>
<evidence type="ECO:0000269" key="5">
    <source>
    </source>
</evidence>
<evidence type="ECO:0000303" key="6">
    <source>
    </source>
</evidence>
<evidence type="ECO:0000303" key="7">
    <source>
    </source>
</evidence>
<evidence type="ECO:0000303" key="8">
    <source>
    </source>
</evidence>
<evidence type="ECO:0000305" key="9"/>
<evidence type="ECO:0000312" key="10">
    <source>
        <dbReference type="HGNC" id="HGNC:33720"/>
    </source>
</evidence>
<comment type="function">
    <text evidence="1">May play a role in cilium morphogenesis.</text>
</comment>
<comment type="subunit">
    <text evidence="1">Interacts with calmodulin; calcium-dependent.</text>
</comment>
<comment type="subcellular location">
    <subcellularLocation>
        <location evidence="5">Cytoplasm</location>
        <location evidence="5">Cytoskeleton</location>
        <location evidence="5">Cilium axoneme</location>
    </subcellularLocation>
    <subcellularLocation>
        <location evidence="1">Cytoplasm</location>
    </subcellularLocation>
    <subcellularLocation>
        <location evidence="1">Cytoplasm</location>
        <location evidence="1">Cytoskeleton</location>
    </subcellularLocation>
    <text evidence="1">Localizes to the manchette in elongating spermatids in a SPAG17-dependent manner.</text>
</comment>
<comment type="alternative products">
    <event type="alternative splicing"/>
    <isoform>
        <id>Q4G0U5-1</id>
        <name>1</name>
        <sequence type="displayed"/>
    </isoform>
    <isoform>
        <id>Q4G0U5-2</id>
        <name>2</name>
        <sequence type="described" ref="VSP_039316"/>
    </isoform>
    <isoform>
        <id>Q4G0U5-3</id>
        <name>3</name>
        <sequence type="described" ref="VSP_039317 VSP_039320 VSP_039321"/>
    </isoform>
    <isoform>
        <id>Q4G0U5-4</id>
        <name>4</name>
        <sequence type="described" ref="VSP_039319 VSP_039318"/>
    </isoform>
</comment>
<comment type="tissue specificity">
    <text evidence="5">Expressed in ciliated respiratory epithelial cells and brain ependymal cells (at protein level).</text>
</comment>
<comment type="similarity">
    <text evidence="9">Belongs to the PCDP1 family.</text>
</comment>
<reference key="1">
    <citation type="journal article" date="2008" name="Mol. Cell. Biol.">
        <title>Primary ciliary dyskinesia in mice lacking the novel ciliary protein Pcdp1.</title>
        <authorList>
            <person name="Lee L."/>
            <person name="Campagna D.R."/>
            <person name="Pinkus J.L."/>
            <person name="Mulhern H."/>
            <person name="Wyatt T.A."/>
            <person name="Sisson J.H."/>
            <person name="Pavlik J.A."/>
            <person name="Pinkus G.S."/>
            <person name="Fleming M.D."/>
        </authorList>
    </citation>
    <scope>NUCLEOTIDE SEQUENCE [MRNA] (ISOFORM 1)</scope>
    <scope>SUBCELLULAR LOCATION</scope>
    <scope>TISSUE SPECIFICITY</scope>
</reference>
<reference key="2">
    <citation type="journal article" date="2004" name="Nat. Genet.">
        <title>Complete sequencing and characterization of 21,243 full-length human cDNAs.</title>
        <authorList>
            <person name="Ota T."/>
            <person name="Suzuki Y."/>
            <person name="Nishikawa T."/>
            <person name="Otsuki T."/>
            <person name="Sugiyama T."/>
            <person name="Irie R."/>
            <person name="Wakamatsu A."/>
            <person name="Hayashi K."/>
            <person name="Sato H."/>
            <person name="Nagai K."/>
            <person name="Kimura K."/>
            <person name="Makita H."/>
            <person name="Sekine M."/>
            <person name="Obayashi M."/>
            <person name="Nishi T."/>
            <person name="Shibahara T."/>
            <person name="Tanaka T."/>
            <person name="Ishii S."/>
            <person name="Yamamoto J."/>
            <person name="Saito K."/>
            <person name="Kawai Y."/>
            <person name="Isono Y."/>
            <person name="Nakamura Y."/>
            <person name="Nagahari K."/>
            <person name="Murakami K."/>
            <person name="Yasuda T."/>
            <person name="Iwayanagi T."/>
            <person name="Wagatsuma M."/>
            <person name="Shiratori A."/>
            <person name="Sudo H."/>
            <person name="Hosoiri T."/>
            <person name="Kaku Y."/>
            <person name="Kodaira H."/>
            <person name="Kondo H."/>
            <person name="Sugawara M."/>
            <person name="Takahashi M."/>
            <person name="Kanda K."/>
            <person name="Yokoi T."/>
            <person name="Furuya T."/>
            <person name="Kikkawa E."/>
            <person name="Omura Y."/>
            <person name="Abe K."/>
            <person name="Kamihara K."/>
            <person name="Katsuta N."/>
            <person name="Sato K."/>
            <person name="Tanikawa M."/>
            <person name="Yamazaki M."/>
            <person name="Ninomiya K."/>
            <person name="Ishibashi T."/>
            <person name="Yamashita H."/>
            <person name="Murakawa K."/>
            <person name="Fujimori K."/>
            <person name="Tanai H."/>
            <person name="Kimata M."/>
            <person name="Watanabe M."/>
            <person name="Hiraoka S."/>
            <person name="Chiba Y."/>
            <person name="Ishida S."/>
            <person name="Ono Y."/>
            <person name="Takiguchi S."/>
            <person name="Watanabe S."/>
            <person name="Yosida M."/>
            <person name="Hotuta T."/>
            <person name="Kusano J."/>
            <person name="Kanehori K."/>
            <person name="Takahashi-Fujii A."/>
            <person name="Hara H."/>
            <person name="Tanase T.-O."/>
            <person name="Nomura Y."/>
            <person name="Togiya S."/>
            <person name="Komai F."/>
            <person name="Hara R."/>
            <person name="Takeuchi K."/>
            <person name="Arita M."/>
            <person name="Imose N."/>
            <person name="Musashino K."/>
            <person name="Yuuki H."/>
            <person name="Oshima A."/>
            <person name="Sasaki N."/>
            <person name="Aotsuka S."/>
            <person name="Yoshikawa Y."/>
            <person name="Matsunawa H."/>
            <person name="Ichihara T."/>
            <person name="Shiohata N."/>
            <person name="Sano S."/>
            <person name="Moriya S."/>
            <person name="Momiyama H."/>
            <person name="Satoh N."/>
            <person name="Takami S."/>
            <person name="Terashima Y."/>
            <person name="Suzuki O."/>
            <person name="Nakagawa S."/>
            <person name="Senoh A."/>
            <person name="Mizoguchi H."/>
            <person name="Goto Y."/>
            <person name="Shimizu F."/>
            <person name="Wakebe H."/>
            <person name="Hishigaki H."/>
            <person name="Watanabe T."/>
            <person name="Sugiyama A."/>
            <person name="Takemoto M."/>
            <person name="Kawakami B."/>
            <person name="Yamazaki M."/>
            <person name="Watanabe K."/>
            <person name="Kumagai A."/>
            <person name="Itakura S."/>
            <person name="Fukuzumi Y."/>
            <person name="Fujimori Y."/>
            <person name="Komiyama M."/>
            <person name="Tashiro H."/>
            <person name="Tanigami A."/>
            <person name="Fujiwara T."/>
            <person name="Ono T."/>
            <person name="Yamada K."/>
            <person name="Fujii Y."/>
            <person name="Ozaki K."/>
            <person name="Hirao M."/>
            <person name="Ohmori Y."/>
            <person name="Kawabata A."/>
            <person name="Hikiji T."/>
            <person name="Kobatake N."/>
            <person name="Inagaki H."/>
            <person name="Ikema Y."/>
            <person name="Okamoto S."/>
            <person name="Okitani R."/>
            <person name="Kawakami T."/>
            <person name="Noguchi S."/>
            <person name="Itoh T."/>
            <person name="Shigeta K."/>
            <person name="Senba T."/>
            <person name="Matsumura K."/>
            <person name="Nakajima Y."/>
            <person name="Mizuno T."/>
            <person name="Morinaga M."/>
            <person name="Sasaki M."/>
            <person name="Togashi T."/>
            <person name="Oyama M."/>
            <person name="Hata H."/>
            <person name="Watanabe M."/>
            <person name="Komatsu T."/>
            <person name="Mizushima-Sugano J."/>
            <person name="Satoh T."/>
            <person name="Shirai Y."/>
            <person name="Takahashi Y."/>
            <person name="Nakagawa K."/>
            <person name="Okumura K."/>
            <person name="Nagase T."/>
            <person name="Nomura N."/>
            <person name="Kikuchi H."/>
            <person name="Masuho Y."/>
            <person name="Yamashita R."/>
            <person name="Nakai K."/>
            <person name="Yada T."/>
            <person name="Nakamura Y."/>
            <person name="Ohara O."/>
            <person name="Isogai T."/>
            <person name="Sugano S."/>
        </authorList>
    </citation>
    <scope>NUCLEOTIDE SEQUENCE [LARGE SCALE MRNA] (ISOFORMS 3 AND 4)</scope>
    <scope>VARIANT ILE-637</scope>
    <source>
        <tissue>Cerebellum</tissue>
        <tissue>Trachea</tissue>
    </source>
</reference>
<reference key="3">
    <citation type="journal article" date="2005" name="Nature">
        <title>Generation and annotation of the DNA sequences of human chromosomes 2 and 4.</title>
        <authorList>
            <person name="Hillier L.W."/>
            <person name="Graves T.A."/>
            <person name="Fulton R.S."/>
            <person name="Fulton L.A."/>
            <person name="Pepin K.H."/>
            <person name="Minx P."/>
            <person name="Wagner-McPherson C."/>
            <person name="Layman D."/>
            <person name="Wylie K."/>
            <person name="Sekhon M."/>
            <person name="Becker M.C."/>
            <person name="Fewell G.A."/>
            <person name="Delehaunty K.D."/>
            <person name="Miner T.L."/>
            <person name="Nash W.E."/>
            <person name="Kremitzki C."/>
            <person name="Oddy L."/>
            <person name="Du H."/>
            <person name="Sun H."/>
            <person name="Bradshaw-Cordum H."/>
            <person name="Ali J."/>
            <person name="Carter J."/>
            <person name="Cordes M."/>
            <person name="Harris A."/>
            <person name="Isak A."/>
            <person name="van Brunt A."/>
            <person name="Nguyen C."/>
            <person name="Du F."/>
            <person name="Courtney L."/>
            <person name="Kalicki J."/>
            <person name="Ozersky P."/>
            <person name="Abbott S."/>
            <person name="Armstrong J."/>
            <person name="Belter E.A."/>
            <person name="Caruso L."/>
            <person name="Cedroni M."/>
            <person name="Cotton M."/>
            <person name="Davidson T."/>
            <person name="Desai A."/>
            <person name="Elliott G."/>
            <person name="Erb T."/>
            <person name="Fronick C."/>
            <person name="Gaige T."/>
            <person name="Haakenson W."/>
            <person name="Haglund K."/>
            <person name="Holmes A."/>
            <person name="Harkins R."/>
            <person name="Kim K."/>
            <person name="Kruchowski S.S."/>
            <person name="Strong C.M."/>
            <person name="Grewal N."/>
            <person name="Goyea E."/>
            <person name="Hou S."/>
            <person name="Levy A."/>
            <person name="Martinka S."/>
            <person name="Mead K."/>
            <person name="McLellan M.D."/>
            <person name="Meyer R."/>
            <person name="Randall-Maher J."/>
            <person name="Tomlinson C."/>
            <person name="Dauphin-Kohlberg S."/>
            <person name="Kozlowicz-Reilly A."/>
            <person name="Shah N."/>
            <person name="Swearengen-Shahid S."/>
            <person name="Snider J."/>
            <person name="Strong J.T."/>
            <person name="Thompson J."/>
            <person name="Yoakum M."/>
            <person name="Leonard S."/>
            <person name="Pearman C."/>
            <person name="Trani L."/>
            <person name="Radionenko M."/>
            <person name="Waligorski J.E."/>
            <person name="Wang C."/>
            <person name="Rock S.M."/>
            <person name="Tin-Wollam A.-M."/>
            <person name="Maupin R."/>
            <person name="Latreille P."/>
            <person name="Wendl M.C."/>
            <person name="Yang S.-P."/>
            <person name="Pohl C."/>
            <person name="Wallis J.W."/>
            <person name="Spieth J."/>
            <person name="Bieri T.A."/>
            <person name="Berkowicz N."/>
            <person name="Nelson J.O."/>
            <person name="Osborne J."/>
            <person name="Ding L."/>
            <person name="Meyer R."/>
            <person name="Sabo A."/>
            <person name="Shotland Y."/>
            <person name="Sinha P."/>
            <person name="Wohldmann P.E."/>
            <person name="Cook L.L."/>
            <person name="Hickenbotham M.T."/>
            <person name="Eldred J."/>
            <person name="Williams D."/>
            <person name="Jones T.A."/>
            <person name="She X."/>
            <person name="Ciccarelli F.D."/>
            <person name="Izaurralde E."/>
            <person name="Taylor J."/>
            <person name="Schmutz J."/>
            <person name="Myers R.M."/>
            <person name="Cox D.R."/>
            <person name="Huang X."/>
            <person name="McPherson J.D."/>
            <person name="Mardis E.R."/>
            <person name="Clifton S.W."/>
            <person name="Warren W.C."/>
            <person name="Chinwalla A.T."/>
            <person name="Eddy S.R."/>
            <person name="Marra M.A."/>
            <person name="Ovcharenko I."/>
            <person name="Furey T.S."/>
            <person name="Miller W."/>
            <person name="Eichler E.E."/>
            <person name="Bork P."/>
            <person name="Suyama M."/>
            <person name="Torrents D."/>
            <person name="Waterston R.H."/>
            <person name="Wilson R.K."/>
        </authorList>
    </citation>
    <scope>NUCLEOTIDE SEQUENCE [LARGE SCALE GENOMIC DNA]</scope>
</reference>
<reference key="4">
    <citation type="journal article" date="2004" name="Genome Res.">
        <title>The status, quality, and expansion of the NIH full-length cDNA project: the Mammalian Gene Collection (MGC).</title>
        <authorList>
            <consortium name="The MGC Project Team"/>
        </authorList>
    </citation>
    <scope>NUCLEOTIDE SEQUENCE [LARGE SCALE MRNA] (ISOFORM 2)</scope>
    <scope>VARIANT ILE-637</scope>
    <source>
        <tissue>Testis</tissue>
    </source>
</reference>
<keyword id="KW-0025">Alternative splicing</keyword>
<keyword id="KW-0112">Calmodulin-binding</keyword>
<keyword id="KW-0966">Cell projection</keyword>
<keyword id="KW-0969">Cilium</keyword>
<keyword id="KW-0970">Cilium biogenesis/degradation</keyword>
<keyword id="KW-0963">Cytoplasm</keyword>
<keyword id="KW-0206">Cytoskeleton</keyword>
<keyword id="KW-1267">Proteomics identification</keyword>
<keyword id="KW-1185">Reference proteome</keyword>
<accession>Q4G0U5</accession>
<accession>B4DEK0</accession>
<accession>B4E2T5</accession>